<comment type="function">
    <text evidence="1">Catalyzes the NAD(P)-dependent oxidation of 4-(phosphooxy)-L-threonine (HTP) into 2-amino-3-oxo-4-(phosphooxy)butyric acid which spontaneously decarboxylates to form 3-amino-2-oxopropyl phosphate (AHAP).</text>
</comment>
<comment type="catalytic activity">
    <reaction evidence="1">
        <text>4-(phosphooxy)-L-threonine + NAD(+) = 3-amino-2-oxopropyl phosphate + CO2 + NADH</text>
        <dbReference type="Rhea" id="RHEA:32275"/>
        <dbReference type="ChEBI" id="CHEBI:16526"/>
        <dbReference type="ChEBI" id="CHEBI:57279"/>
        <dbReference type="ChEBI" id="CHEBI:57540"/>
        <dbReference type="ChEBI" id="CHEBI:57945"/>
        <dbReference type="ChEBI" id="CHEBI:58452"/>
        <dbReference type="EC" id="1.1.1.262"/>
    </reaction>
</comment>
<comment type="cofactor">
    <cofactor evidence="1">
        <name>Zn(2+)</name>
        <dbReference type="ChEBI" id="CHEBI:29105"/>
    </cofactor>
    <cofactor evidence="1">
        <name>Mg(2+)</name>
        <dbReference type="ChEBI" id="CHEBI:18420"/>
    </cofactor>
    <cofactor evidence="1">
        <name>Co(2+)</name>
        <dbReference type="ChEBI" id="CHEBI:48828"/>
    </cofactor>
    <text evidence="1">Binds 1 divalent metal cation per subunit. Can use ions such as Zn(2+), Mg(2+) or Co(2+).</text>
</comment>
<comment type="pathway">
    <text evidence="1">Cofactor biosynthesis; pyridoxine 5'-phosphate biosynthesis; pyridoxine 5'-phosphate from D-erythrose 4-phosphate: step 4/5.</text>
</comment>
<comment type="subunit">
    <text evidence="1">Homodimer.</text>
</comment>
<comment type="subcellular location">
    <subcellularLocation>
        <location evidence="1">Cytoplasm</location>
    </subcellularLocation>
</comment>
<comment type="miscellaneous">
    <text evidence="1">The active site is located at the dimer interface.</text>
</comment>
<comment type="similarity">
    <text evidence="1">Belongs to the PdxA family.</text>
</comment>
<proteinExistence type="inferred from homology"/>
<gene>
    <name evidence="1" type="primary">pdxA</name>
    <name type="ordered locus">MCA0603</name>
</gene>
<feature type="chain" id="PRO_1000081868" description="4-hydroxythreonine-4-phosphate dehydrogenase">
    <location>
        <begin position="1"/>
        <end position="330"/>
    </location>
</feature>
<feature type="binding site" evidence="1">
    <location>
        <position position="134"/>
    </location>
    <ligand>
        <name>substrate</name>
    </ligand>
</feature>
<feature type="binding site" evidence="1">
    <location>
        <position position="135"/>
    </location>
    <ligand>
        <name>substrate</name>
    </ligand>
</feature>
<feature type="binding site" evidence="1">
    <location>
        <position position="163"/>
    </location>
    <ligand>
        <name>a divalent metal cation</name>
        <dbReference type="ChEBI" id="CHEBI:60240"/>
        <note>ligand shared between dimeric partners</note>
    </ligand>
</feature>
<feature type="binding site" evidence="1">
    <location>
        <position position="208"/>
    </location>
    <ligand>
        <name>a divalent metal cation</name>
        <dbReference type="ChEBI" id="CHEBI:60240"/>
        <note>ligand shared between dimeric partners</note>
    </ligand>
</feature>
<feature type="binding site" evidence="1">
    <location>
        <position position="263"/>
    </location>
    <ligand>
        <name>a divalent metal cation</name>
        <dbReference type="ChEBI" id="CHEBI:60240"/>
        <note>ligand shared between dimeric partners</note>
    </ligand>
</feature>
<feature type="binding site" evidence="1">
    <location>
        <position position="271"/>
    </location>
    <ligand>
        <name>substrate</name>
    </ligand>
</feature>
<feature type="binding site" evidence="1">
    <location>
        <position position="280"/>
    </location>
    <ligand>
        <name>substrate</name>
    </ligand>
</feature>
<feature type="binding site" evidence="1">
    <location>
        <position position="289"/>
    </location>
    <ligand>
        <name>substrate</name>
    </ligand>
</feature>
<keyword id="KW-0170">Cobalt</keyword>
<keyword id="KW-0963">Cytoplasm</keyword>
<keyword id="KW-0460">Magnesium</keyword>
<keyword id="KW-0479">Metal-binding</keyword>
<keyword id="KW-0520">NAD</keyword>
<keyword id="KW-0521">NADP</keyword>
<keyword id="KW-0560">Oxidoreductase</keyword>
<keyword id="KW-0664">Pyridoxine biosynthesis</keyword>
<keyword id="KW-1185">Reference proteome</keyword>
<keyword id="KW-0862">Zinc</keyword>
<reference key="1">
    <citation type="journal article" date="2004" name="PLoS Biol.">
        <title>Genomic insights into methanotrophy: the complete genome sequence of Methylococcus capsulatus (Bath).</title>
        <authorList>
            <person name="Ward N.L."/>
            <person name="Larsen O."/>
            <person name="Sakwa J."/>
            <person name="Bruseth L."/>
            <person name="Khouri H.M."/>
            <person name="Durkin A.S."/>
            <person name="Dimitrov G."/>
            <person name="Jiang L."/>
            <person name="Scanlan D."/>
            <person name="Kang K.H."/>
            <person name="Lewis M.R."/>
            <person name="Nelson K.E."/>
            <person name="Methe B.A."/>
            <person name="Wu M."/>
            <person name="Heidelberg J.F."/>
            <person name="Paulsen I.T."/>
            <person name="Fouts D.E."/>
            <person name="Ravel J."/>
            <person name="Tettelin H."/>
            <person name="Ren Q."/>
            <person name="Read T.D."/>
            <person name="DeBoy R.T."/>
            <person name="Seshadri R."/>
            <person name="Salzberg S.L."/>
            <person name="Jensen H.B."/>
            <person name="Birkeland N.K."/>
            <person name="Nelson W.C."/>
            <person name="Dodson R.J."/>
            <person name="Grindhaug S.H."/>
            <person name="Holt I.E."/>
            <person name="Eidhammer I."/>
            <person name="Jonasen I."/>
            <person name="Vanaken S."/>
            <person name="Utterback T.R."/>
            <person name="Feldblyum T.V."/>
            <person name="Fraser C.M."/>
            <person name="Lillehaug J.R."/>
            <person name="Eisen J.A."/>
        </authorList>
    </citation>
    <scope>NUCLEOTIDE SEQUENCE [LARGE SCALE GENOMIC DNA]</scope>
    <source>
        <strain>ATCC 33009 / NCIMB 11132 / Bath</strain>
    </source>
</reference>
<protein>
    <recommendedName>
        <fullName evidence="1">4-hydroxythreonine-4-phosphate dehydrogenase</fullName>
        <ecNumber evidence="1">1.1.1.262</ecNumber>
    </recommendedName>
    <alternativeName>
        <fullName evidence="1">4-(phosphohydroxy)-L-threonine dehydrogenase</fullName>
    </alternativeName>
</protein>
<accession>Q3V8A3</accession>
<dbReference type="EC" id="1.1.1.262" evidence="1"/>
<dbReference type="EMBL" id="AE017282">
    <property type="protein sequence ID" value="AAU93126.1"/>
    <property type="molecule type" value="Genomic_DNA"/>
</dbReference>
<dbReference type="RefSeq" id="WP_010959948.1">
    <property type="nucleotide sequence ID" value="NC_002977.6"/>
</dbReference>
<dbReference type="SMR" id="Q3V8A3"/>
<dbReference type="STRING" id="243233.MCA0603"/>
<dbReference type="GeneID" id="88222934"/>
<dbReference type="KEGG" id="mca:MCA0603"/>
<dbReference type="eggNOG" id="COG1995">
    <property type="taxonomic scope" value="Bacteria"/>
</dbReference>
<dbReference type="HOGENOM" id="CLU_040168_1_0_6"/>
<dbReference type="UniPathway" id="UPA00244">
    <property type="reaction ID" value="UER00312"/>
</dbReference>
<dbReference type="Proteomes" id="UP000006821">
    <property type="component" value="Chromosome"/>
</dbReference>
<dbReference type="GO" id="GO:0005737">
    <property type="term" value="C:cytoplasm"/>
    <property type="evidence" value="ECO:0007669"/>
    <property type="project" value="UniProtKB-SubCell"/>
</dbReference>
<dbReference type="GO" id="GO:0050570">
    <property type="term" value="F:4-hydroxythreonine-4-phosphate dehydrogenase activity"/>
    <property type="evidence" value="ECO:0007669"/>
    <property type="project" value="UniProtKB-UniRule"/>
</dbReference>
<dbReference type="GO" id="GO:0050897">
    <property type="term" value="F:cobalt ion binding"/>
    <property type="evidence" value="ECO:0007669"/>
    <property type="project" value="UniProtKB-UniRule"/>
</dbReference>
<dbReference type="GO" id="GO:0000287">
    <property type="term" value="F:magnesium ion binding"/>
    <property type="evidence" value="ECO:0007669"/>
    <property type="project" value="UniProtKB-UniRule"/>
</dbReference>
<dbReference type="GO" id="GO:0051287">
    <property type="term" value="F:NAD binding"/>
    <property type="evidence" value="ECO:0007669"/>
    <property type="project" value="InterPro"/>
</dbReference>
<dbReference type="GO" id="GO:0008270">
    <property type="term" value="F:zinc ion binding"/>
    <property type="evidence" value="ECO:0007669"/>
    <property type="project" value="UniProtKB-UniRule"/>
</dbReference>
<dbReference type="GO" id="GO:0042823">
    <property type="term" value="P:pyridoxal phosphate biosynthetic process"/>
    <property type="evidence" value="ECO:0007669"/>
    <property type="project" value="UniProtKB-UniRule"/>
</dbReference>
<dbReference type="GO" id="GO:0008615">
    <property type="term" value="P:pyridoxine biosynthetic process"/>
    <property type="evidence" value="ECO:0007669"/>
    <property type="project" value="UniProtKB-UniRule"/>
</dbReference>
<dbReference type="Gene3D" id="3.40.718.10">
    <property type="entry name" value="Isopropylmalate Dehydrogenase"/>
    <property type="match status" value="1"/>
</dbReference>
<dbReference type="HAMAP" id="MF_00536">
    <property type="entry name" value="PdxA"/>
    <property type="match status" value="1"/>
</dbReference>
<dbReference type="InterPro" id="IPR037510">
    <property type="entry name" value="PdxA"/>
</dbReference>
<dbReference type="InterPro" id="IPR005255">
    <property type="entry name" value="PdxA_fam"/>
</dbReference>
<dbReference type="NCBIfam" id="TIGR00557">
    <property type="entry name" value="pdxA"/>
    <property type="match status" value="1"/>
</dbReference>
<dbReference type="PANTHER" id="PTHR30004">
    <property type="entry name" value="4-HYDROXYTHREONINE-4-PHOSPHATE DEHYDROGENASE"/>
    <property type="match status" value="1"/>
</dbReference>
<dbReference type="PANTHER" id="PTHR30004:SF5">
    <property type="entry name" value="4-HYDROXYTHREONINE-4-PHOSPHATE DEHYDROGENASE"/>
    <property type="match status" value="1"/>
</dbReference>
<dbReference type="Pfam" id="PF04166">
    <property type="entry name" value="PdxA"/>
    <property type="match status" value="1"/>
</dbReference>
<dbReference type="SUPFAM" id="SSF53659">
    <property type="entry name" value="Isocitrate/Isopropylmalate dehydrogenase-like"/>
    <property type="match status" value="1"/>
</dbReference>
<name>PDXA_METCA</name>
<evidence type="ECO:0000255" key="1">
    <source>
        <dbReference type="HAMAP-Rule" id="MF_00536"/>
    </source>
</evidence>
<organism>
    <name type="scientific">Methylococcus capsulatus (strain ATCC 33009 / NCIMB 11132 / Bath)</name>
    <dbReference type="NCBI Taxonomy" id="243233"/>
    <lineage>
        <taxon>Bacteria</taxon>
        <taxon>Pseudomonadati</taxon>
        <taxon>Pseudomonadota</taxon>
        <taxon>Gammaproteobacteria</taxon>
        <taxon>Methylococcales</taxon>
        <taxon>Methylococcaceae</taxon>
        <taxon>Methylococcus</taxon>
    </lineage>
</organism>
<sequence length="330" mass="34736">MPPRLLLTSGEPAGIGPDLCVLLSRRPFPCGITVLGDPDLLESRARLLGVPIELRRVVSGDVVPPHEPGVLHVLPTRRQPGTAPGKLDPANAAYVLETIADGARACLAGHYDALVTAPVQKSVINEAGIAFTGHTEFIAGITGGSPVMMLAAEGFRVALATTHLPLAEVSRAITVERLTGVLGVLHEDLVRRFGFSRPRILVCGLNPHAGEGGHLGGEEITVIEPVLARLRQDGMDLTGPLPADTLFLPHNLDRADAVLAMYHDQGLPVLKYAGFSRAVNITLGLPIIRTSVDHGTALDRAGTGQIDTGSLEEAVRVAMEMATGRPAESP</sequence>